<sequence>MSSSEVASHYNKVLQVGIEGRKESRIFFMRNMNNWVKSQLINDAKQRVNDNGVNNPRVLDLACGKGGDLKKWDIAGAKDVVMADVADVSIQQAEERYKQMFGYKKNNIFTVQFIVADCTKENLEDRIENKDPFDLVSCQFALHYSFVDEASARIFLKNAVGMLKPGGVFIGTLPDADRIVWSMRNGENGQFANEVCKITYENVEELAEGKVPLFGAKFHFSLDEQVNCPEFLAYFPLVKHLLEELDMELLFVHNFAEAINKWLEPGRRLLESMTGLETYPNEKLSGKSDDEYLEAKAKLDAFPEDERIKTMGTLSKSEWEAICMYLVFGFRKKKSEAEKTEEEPATTKPVAESESEQKEVTESEEKEDQEDCEHQEAQTN</sequence>
<proteinExistence type="inferred from homology"/>
<keyword id="KW-0489">Methyltransferase</keyword>
<keyword id="KW-0506">mRNA capping</keyword>
<keyword id="KW-0507">mRNA processing</keyword>
<keyword id="KW-0539">Nucleus</keyword>
<keyword id="KW-1185">Reference proteome</keyword>
<keyword id="KW-0694">RNA-binding</keyword>
<keyword id="KW-0949">S-adenosyl-L-methionine</keyword>
<keyword id="KW-0808">Transferase</keyword>
<protein>
    <recommendedName>
        <fullName>mRNA cap guanine-N(7) methyltransferase</fullName>
        <ecNumber evidence="2">2.1.1.56</ecNumber>
    </recommendedName>
    <alternativeName>
        <fullName>mRNA (guanine-N(7))-methyltransferase</fullName>
    </alternativeName>
</protein>
<comment type="function">
    <text evidence="1">mRNA-capping methyltransferase that methylates the N7 position of the added guanosine to the 5'-cap structure of mRNAs. Binds RNA containing 5'-terminal GpppC (By similarity).</text>
</comment>
<comment type="catalytic activity">
    <reaction evidence="2 3">
        <text>a 5'-end (5'-triphosphoguanosine)-ribonucleoside in mRNA + S-adenosyl-L-methionine = a 5'-end (N(7)-methyl 5'-triphosphoguanosine)-ribonucleoside in mRNA + S-adenosyl-L-homocysteine</text>
        <dbReference type="Rhea" id="RHEA:67008"/>
        <dbReference type="Rhea" id="RHEA-COMP:17166"/>
        <dbReference type="Rhea" id="RHEA-COMP:17167"/>
        <dbReference type="ChEBI" id="CHEBI:57856"/>
        <dbReference type="ChEBI" id="CHEBI:59789"/>
        <dbReference type="ChEBI" id="CHEBI:156461"/>
        <dbReference type="ChEBI" id="CHEBI:167617"/>
        <dbReference type="EC" id="2.1.1.56"/>
    </reaction>
</comment>
<comment type="subcellular location">
    <subcellularLocation>
        <location evidence="1">Nucleus</location>
    </subcellularLocation>
</comment>
<comment type="similarity">
    <text evidence="3">Belongs to the class I-like SAM-binding methyltransferase superfamily. mRNA cap 0 methyltransferase family.</text>
</comment>
<accession>Q9XVS1</accession>
<feature type="chain" id="PRO_0000248329" description="mRNA cap guanine-N(7) methyltransferase">
    <location>
        <begin position="1"/>
        <end position="380"/>
    </location>
</feature>
<feature type="domain" description="mRNA cap 0 methyltransferase" evidence="3">
    <location>
        <begin position="24"/>
        <end position="333"/>
    </location>
</feature>
<feature type="region of interest" description="Disordered" evidence="4">
    <location>
        <begin position="336"/>
        <end position="380"/>
    </location>
</feature>
<feature type="binding site" evidence="3">
    <location>
        <begin position="33"/>
        <end position="34"/>
    </location>
    <ligand>
        <name>mRNA</name>
        <dbReference type="ChEBI" id="CHEBI:33699"/>
    </ligand>
    <ligandPart>
        <name>mRNA cap</name>
    </ligandPart>
</feature>
<feature type="binding site" evidence="3">
    <location>
        <position position="37"/>
    </location>
    <ligand>
        <name>S-adenosyl-L-methionine</name>
        <dbReference type="ChEBI" id="CHEBI:59789"/>
    </ligand>
</feature>
<feature type="binding site" evidence="3">
    <location>
        <position position="62"/>
    </location>
    <ligand>
        <name>S-adenosyl-L-methionine</name>
        <dbReference type="ChEBI" id="CHEBI:59789"/>
    </ligand>
</feature>
<feature type="binding site" evidence="3">
    <location>
        <position position="84"/>
    </location>
    <ligand>
        <name>S-adenosyl-L-methionine</name>
        <dbReference type="ChEBI" id="CHEBI:59789"/>
    </ligand>
</feature>
<feature type="binding site" evidence="2">
    <location>
        <position position="117"/>
    </location>
    <ligand>
        <name>S-adenosyl-L-methionine</name>
        <dbReference type="ChEBI" id="CHEBI:59789"/>
    </ligand>
</feature>
<feature type="binding site" evidence="2">
    <location>
        <position position="139"/>
    </location>
    <ligand>
        <name>S-adenosyl-L-methionine</name>
        <dbReference type="ChEBI" id="CHEBI:59789"/>
    </ligand>
</feature>
<feature type="binding site" evidence="2">
    <location>
        <position position="144"/>
    </location>
    <ligand>
        <name>S-adenosyl-L-methionine</name>
        <dbReference type="ChEBI" id="CHEBI:59789"/>
    </ligand>
</feature>
<feature type="site" description="mRNA cap binding" evidence="3">
    <location>
        <position position="65"/>
    </location>
</feature>
<feature type="site" description="mRNA cap binding" evidence="3">
    <location>
        <position position="71"/>
    </location>
</feature>
<feature type="site" description="mRNA cap binding" evidence="3">
    <location>
        <position position="96"/>
    </location>
</feature>
<feature type="site" description="mRNA cap binding" evidence="3">
    <location>
        <position position="143"/>
    </location>
</feature>
<feature type="site" description="mRNA cap binding" evidence="3">
    <location>
        <position position="230"/>
    </location>
</feature>
<feature type="site" description="mRNA cap binding" evidence="3">
    <location>
        <position position="325"/>
    </location>
</feature>
<dbReference type="EC" id="2.1.1.56" evidence="2"/>
<dbReference type="EMBL" id="Z81038">
    <property type="protein sequence ID" value="CAB02758.2"/>
    <property type="molecule type" value="Genomic_DNA"/>
</dbReference>
<dbReference type="PIR" id="T19434">
    <property type="entry name" value="T19434"/>
</dbReference>
<dbReference type="RefSeq" id="NP_492674.2">
    <property type="nucleotide sequence ID" value="NM_060273.10"/>
</dbReference>
<dbReference type="SMR" id="Q9XVS1"/>
<dbReference type="BioGRID" id="47715">
    <property type="interactions" value="4"/>
</dbReference>
<dbReference type="FunCoup" id="Q9XVS1">
    <property type="interactions" value="3345"/>
</dbReference>
<dbReference type="STRING" id="6239.C25A1.3.1"/>
<dbReference type="PaxDb" id="6239-C25A1.3"/>
<dbReference type="PeptideAtlas" id="Q9XVS1"/>
<dbReference type="EnsemblMetazoa" id="C25A1.3.1">
    <property type="protein sequence ID" value="C25A1.3.1"/>
    <property type="gene ID" value="WBGene00006447"/>
</dbReference>
<dbReference type="GeneID" id="182875"/>
<dbReference type="KEGG" id="cel:CELE_C25A1.3"/>
<dbReference type="UCSC" id="C25A1.3">
    <property type="organism name" value="c. elegans"/>
</dbReference>
<dbReference type="AGR" id="WB:WBGene00006447"/>
<dbReference type="CTD" id="182875"/>
<dbReference type="WormBase" id="C25A1.3">
    <property type="protein sequence ID" value="CE36918"/>
    <property type="gene ID" value="WBGene00006447"/>
    <property type="gene designation" value="tag-72"/>
</dbReference>
<dbReference type="eggNOG" id="KOG1975">
    <property type="taxonomic scope" value="Eukaryota"/>
</dbReference>
<dbReference type="GeneTree" id="ENSGT00390000002368"/>
<dbReference type="HOGENOM" id="CLU_020346_0_0_1"/>
<dbReference type="InParanoid" id="Q9XVS1"/>
<dbReference type="OMA" id="LITGDCF"/>
<dbReference type="OrthoDB" id="10248867at2759"/>
<dbReference type="PhylomeDB" id="Q9XVS1"/>
<dbReference type="Reactome" id="R-CEL-72086">
    <property type="pathway name" value="mRNA Capping"/>
</dbReference>
<dbReference type="Reactome" id="R-CEL-77075">
    <property type="pathway name" value="RNA Pol II CTD phosphorylation and interaction with CE"/>
</dbReference>
<dbReference type="PRO" id="PR:Q9XVS1"/>
<dbReference type="Proteomes" id="UP000001940">
    <property type="component" value="Chromosome I"/>
</dbReference>
<dbReference type="Bgee" id="WBGene00006447">
    <property type="expression patterns" value="Expressed in germ line (C elegans) and 4 other cell types or tissues"/>
</dbReference>
<dbReference type="GO" id="GO:0005634">
    <property type="term" value="C:nucleus"/>
    <property type="evidence" value="ECO:0000250"/>
    <property type="project" value="UniProtKB"/>
</dbReference>
<dbReference type="GO" id="GO:0004482">
    <property type="term" value="F:mRNA 5'-cap (guanine-N7-)-methyltransferase activity"/>
    <property type="evidence" value="ECO:0000250"/>
    <property type="project" value="UniProtKB"/>
</dbReference>
<dbReference type="GO" id="GO:0003723">
    <property type="term" value="F:RNA binding"/>
    <property type="evidence" value="ECO:0000250"/>
    <property type="project" value="UniProtKB"/>
</dbReference>
<dbReference type="GO" id="GO:0006370">
    <property type="term" value="P:7-methylguanosine mRNA capping"/>
    <property type="evidence" value="ECO:0000250"/>
    <property type="project" value="UniProtKB"/>
</dbReference>
<dbReference type="CDD" id="cd02440">
    <property type="entry name" value="AdoMet_MTases"/>
    <property type="match status" value="1"/>
</dbReference>
<dbReference type="Gene3D" id="3.40.50.150">
    <property type="entry name" value="Vaccinia Virus protein VP39"/>
    <property type="match status" value="1"/>
</dbReference>
<dbReference type="InterPro" id="IPR004971">
    <property type="entry name" value="mRNA_G-N7_MeTrfase_dom"/>
</dbReference>
<dbReference type="InterPro" id="IPR016899">
    <property type="entry name" value="mRNA_G-N7_MeTrfase_euk"/>
</dbReference>
<dbReference type="InterPro" id="IPR039753">
    <property type="entry name" value="RG7MT1"/>
</dbReference>
<dbReference type="InterPro" id="IPR029063">
    <property type="entry name" value="SAM-dependent_MTases_sf"/>
</dbReference>
<dbReference type="PANTHER" id="PTHR12189:SF2">
    <property type="entry name" value="MRNA CAP GUANINE-N7 METHYLTRANSFERASE"/>
    <property type="match status" value="1"/>
</dbReference>
<dbReference type="PANTHER" id="PTHR12189">
    <property type="entry name" value="MRNA GUANINE-7- METHYLTRANSFERASE"/>
    <property type="match status" value="1"/>
</dbReference>
<dbReference type="Pfam" id="PF03291">
    <property type="entry name" value="mRNA_G-N7_MeTrfase"/>
    <property type="match status" value="1"/>
</dbReference>
<dbReference type="PIRSF" id="PIRSF028762">
    <property type="entry name" value="ABD1"/>
    <property type="match status" value="1"/>
</dbReference>
<dbReference type="SUPFAM" id="SSF53335">
    <property type="entry name" value="S-adenosyl-L-methionine-dependent methyltransferases"/>
    <property type="match status" value="1"/>
</dbReference>
<dbReference type="PROSITE" id="PS51562">
    <property type="entry name" value="RNA_CAP0_MT"/>
    <property type="match status" value="1"/>
</dbReference>
<gene>
    <name type="primary">tag-72</name>
    <name type="ORF">C25A1.3</name>
</gene>
<name>MCES_CAEEL</name>
<evidence type="ECO:0000250" key="1"/>
<evidence type="ECO:0000250" key="2">
    <source>
        <dbReference type="UniProtKB" id="O43148"/>
    </source>
</evidence>
<evidence type="ECO:0000255" key="3">
    <source>
        <dbReference type="PROSITE-ProRule" id="PRU00895"/>
    </source>
</evidence>
<evidence type="ECO:0000256" key="4">
    <source>
        <dbReference type="SAM" id="MobiDB-lite"/>
    </source>
</evidence>
<reference key="1">
    <citation type="journal article" date="1998" name="Science">
        <title>Genome sequence of the nematode C. elegans: a platform for investigating biology.</title>
        <authorList>
            <consortium name="The C. elegans sequencing consortium"/>
        </authorList>
    </citation>
    <scope>NUCLEOTIDE SEQUENCE [LARGE SCALE GENOMIC DNA]</scope>
    <source>
        <strain>Bristol N2</strain>
    </source>
</reference>
<organism>
    <name type="scientific">Caenorhabditis elegans</name>
    <dbReference type="NCBI Taxonomy" id="6239"/>
    <lineage>
        <taxon>Eukaryota</taxon>
        <taxon>Metazoa</taxon>
        <taxon>Ecdysozoa</taxon>
        <taxon>Nematoda</taxon>
        <taxon>Chromadorea</taxon>
        <taxon>Rhabditida</taxon>
        <taxon>Rhabditina</taxon>
        <taxon>Rhabditomorpha</taxon>
        <taxon>Rhabditoidea</taxon>
        <taxon>Rhabditidae</taxon>
        <taxon>Peloderinae</taxon>
        <taxon>Caenorhabditis</taxon>
    </lineage>
</organism>